<evidence type="ECO:0000255" key="1">
    <source>
        <dbReference type="HAMAP-Rule" id="MF_00297"/>
    </source>
</evidence>
<protein>
    <recommendedName>
        <fullName evidence="1">NAD-capped RNA hydrolase NudC</fullName>
        <shortName evidence="1">DeNADding enzyme NudC</shortName>
        <ecNumber evidence="1">3.6.1.-</ecNumber>
    </recommendedName>
    <alternativeName>
        <fullName evidence="1">NADH pyrophosphatase</fullName>
        <ecNumber evidence="1">3.6.1.22</ecNumber>
    </alternativeName>
</protein>
<name>NUDC_YERPN</name>
<reference key="1">
    <citation type="journal article" date="2006" name="J. Bacteriol.">
        <title>Complete genome sequence of Yersinia pestis strains Antiqua and Nepal516: evidence of gene reduction in an emerging pathogen.</title>
        <authorList>
            <person name="Chain P.S.G."/>
            <person name="Hu P."/>
            <person name="Malfatti S.A."/>
            <person name="Radnedge L."/>
            <person name="Larimer F."/>
            <person name="Vergez L.M."/>
            <person name="Worsham P."/>
            <person name="Chu M.C."/>
            <person name="Andersen G.L."/>
        </authorList>
    </citation>
    <scope>NUCLEOTIDE SEQUENCE [LARGE SCALE GENOMIC DNA]</scope>
    <source>
        <strain>Nepal516</strain>
    </source>
</reference>
<reference key="2">
    <citation type="submission" date="2009-04" db="EMBL/GenBank/DDBJ databases">
        <title>Yersinia pestis Nepal516A whole genome shotgun sequencing project.</title>
        <authorList>
            <person name="Plunkett G. III"/>
            <person name="Anderson B.D."/>
            <person name="Baumler D.J."/>
            <person name="Burland V."/>
            <person name="Cabot E.L."/>
            <person name="Glasner J.D."/>
            <person name="Mau B."/>
            <person name="Neeno-Eckwall E."/>
            <person name="Perna N.T."/>
            <person name="Munk A.C."/>
            <person name="Tapia R."/>
            <person name="Green L.D."/>
            <person name="Rogers Y.C."/>
            <person name="Detter J.C."/>
            <person name="Bruce D.C."/>
            <person name="Brettin T.S."/>
        </authorList>
    </citation>
    <scope>NUCLEOTIDE SEQUENCE [LARGE SCALE GENOMIC DNA]</scope>
    <source>
        <strain>Nepal516</strain>
    </source>
</reference>
<sequence>MELQLTGKESGWWIVSHENKLWLPKGELPQGNAANWSLQGTTARQIGEWQGQSVWLIRQMMPSGMGSVRQLLDVDRGLFQLAGRGVQLAEFYRSHRFCGYCGHEMHASRTEWASLCNHCRERYYPQIAPCVIVAIRRGDEILLAQHVRHRGGINTVLAGFVEVGETLEQAVSREVLEESNIHIKNLRYVTSQPWPFPHSLMMAFMADYDSGELCHDPKELLNAGWYRYDQLPLLPPPGTVARRLIEDTVVLCREHSDLSQ</sequence>
<proteinExistence type="inferred from homology"/>
<accession>Q1CN68</accession>
<accession>C4GNF6</accession>
<keyword id="KW-0378">Hydrolase</keyword>
<keyword id="KW-0460">Magnesium</keyword>
<keyword id="KW-0464">Manganese</keyword>
<keyword id="KW-0479">Metal-binding</keyword>
<keyword id="KW-0520">NAD</keyword>
<keyword id="KW-0862">Zinc</keyword>
<dbReference type="EC" id="3.6.1.-" evidence="1"/>
<dbReference type="EC" id="3.6.1.22" evidence="1"/>
<dbReference type="EMBL" id="CP000305">
    <property type="protein sequence ID" value="ABG16562.1"/>
    <property type="molecule type" value="Genomic_DNA"/>
</dbReference>
<dbReference type="EMBL" id="ACNQ01000004">
    <property type="protein sequence ID" value="EEO78480.1"/>
    <property type="molecule type" value="Genomic_DNA"/>
</dbReference>
<dbReference type="RefSeq" id="WP_002210684.1">
    <property type="nucleotide sequence ID" value="NZ_ACNQ01000004.1"/>
</dbReference>
<dbReference type="SMR" id="Q1CN68"/>
<dbReference type="GeneID" id="57974981"/>
<dbReference type="KEGG" id="ypn:YPN_0229"/>
<dbReference type="HOGENOM" id="CLU_037162_0_1_6"/>
<dbReference type="Proteomes" id="UP000008936">
    <property type="component" value="Chromosome"/>
</dbReference>
<dbReference type="GO" id="GO:0005829">
    <property type="term" value="C:cytosol"/>
    <property type="evidence" value="ECO:0007669"/>
    <property type="project" value="TreeGrafter"/>
</dbReference>
<dbReference type="GO" id="GO:0000287">
    <property type="term" value="F:magnesium ion binding"/>
    <property type="evidence" value="ECO:0007669"/>
    <property type="project" value="UniProtKB-UniRule"/>
</dbReference>
<dbReference type="GO" id="GO:0030145">
    <property type="term" value="F:manganese ion binding"/>
    <property type="evidence" value="ECO:0007669"/>
    <property type="project" value="UniProtKB-UniRule"/>
</dbReference>
<dbReference type="GO" id="GO:0000210">
    <property type="term" value="F:NAD+ diphosphatase activity"/>
    <property type="evidence" value="ECO:0007669"/>
    <property type="project" value="UniProtKB-UniRule"/>
</dbReference>
<dbReference type="GO" id="GO:0035529">
    <property type="term" value="F:NADH pyrophosphatase activity"/>
    <property type="evidence" value="ECO:0007669"/>
    <property type="project" value="TreeGrafter"/>
</dbReference>
<dbReference type="GO" id="GO:0110153">
    <property type="term" value="F:RNA NAD-cap (NMN-forming) hydrolase activity"/>
    <property type="evidence" value="ECO:0007669"/>
    <property type="project" value="RHEA"/>
</dbReference>
<dbReference type="GO" id="GO:0008270">
    <property type="term" value="F:zinc ion binding"/>
    <property type="evidence" value="ECO:0007669"/>
    <property type="project" value="UniProtKB-UniRule"/>
</dbReference>
<dbReference type="GO" id="GO:0019677">
    <property type="term" value="P:NAD catabolic process"/>
    <property type="evidence" value="ECO:0007669"/>
    <property type="project" value="TreeGrafter"/>
</dbReference>
<dbReference type="GO" id="GO:0006734">
    <property type="term" value="P:NADH metabolic process"/>
    <property type="evidence" value="ECO:0007669"/>
    <property type="project" value="TreeGrafter"/>
</dbReference>
<dbReference type="GO" id="GO:0006742">
    <property type="term" value="P:NADP catabolic process"/>
    <property type="evidence" value="ECO:0007669"/>
    <property type="project" value="TreeGrafter"/>
</dbReference>
<dbReference type="CDD" id="cd03429">
    <property type="entry name" value="NUDIX_NADH_pyrophosphatase_Nudt13"/>
    <property type="match status" value="1"/>
</dbReference>
<dbReference type="FunFam" id="3.90.79.10:FF:000004">
    <property type="entry name" value="NADH pyrophosphatase"/>
    <property type="match status" value="1"/>
</dbReference>
<dbReference type="FunFam" id="3.90.79.20:FF:000001">
    <property type="entry name" value="NADH pyrophosphatase"/>
    <property type="match status" value="1"/>
</dbReference>
<dbReference type="Gene3D" id="3.90.79.20">
    <property type="match status" value="1"/>
</dbReference>
<dbReference type="Gene3D" id="3.90.79.10">
    <property type="entry name" value="Nucleoside Triphosphate Pyrophosphohydrolase"/>
    <property type="match status" value="1"/>
</dbReference>
<dbReference type="HAMAP" id="MF_00297">
    <property type="entry name" value="Nudix_NudC"/>
    <property type="match status" value="1"/>
</dbReference>
<dbReference type="InterPro" id="IPR050241">
    <property type="entry name" value="NAD-cap_RNA_hydrolase_NudC"/>
</dbReference>
<dbReference type="InterPro" id="IPR049734">
    <property type="entry name" value="NudC-like_C"/>
</dbReference>
<dbReference type="InterPro" id="IPR015797">
    <property type="entry name" value="NUDIX_hydrolase-like_dom_sf"/>
</dbReference>
<dbReference type="InterPro" id="IPR020084">
    <property type="entry name" value="NUDIX_hydrolase_CS"/>
</dbReference>
<dbReference type="InterPro" id="IPR000086">
    <property type="entry name" value="NUDIX_hydrolase_dom"/>
</dbReference>
<dbReference type="InterPro" id="IPR022925">
    <property type="entry name" value="RNA_Hydrolase_NudC"/>
</dbReference>
<dbReference type="InterPro" id="IPR015376">
    <property type="entry name" value="Znr_NADH_PPase"/>
</dbReference>
<dbReference type="NCBIfam" id="NF001299">
    <property type="entry name" value="PRK00241.1"/>
    <property type="match status" value="1"/>
</dbReference>
<dbReference type="PANTHER" id="PTHR42904:SF6">
    <property type="entry name" value="NAD-CAPPED RNA HYDROLASE NUDT12"/>
    <property type="match status" value="1"/>
</dbReference>
<dbReference type="PANTHER" id="PTHR42904">
    <property type="entry name" value="NUDIX HYDROLASE, NUDC SUBFAMILY"/>
    <property type="match status" value="1"/>
</dbReference>
<dbReference type="Pfam" id="PF00293">
    <property type="entry name" value="NUDIX"/>
    <property type="match status" value="1"/>
</dbReference>
<dbReference type="Pfam" id="PF09297">
    <property type="entry name" value="Zn_ribbon_NUD"/>
    <property type="match status" value="1"/>
</dbReference>
<dbReference type="SUPFAM" id="SSF55811">
    <property type="entry name" value="Nudix"/>
    <property type="match status" value="2"/>
</dbReference>
<dbReference type="PROSITE" id="PS51462">
    <property type="entry name" value="NUDIX"/>
    <property type="match status" value="1"/>
</dbReference>
<dbReference type="PROSITE" id="PS00893">
    <property type="entry name" value="NUDIX_BOX"/>
    <property type="match status" value="1"/>
</dbReference>
<organism>
    <name type="scientific">Yersinia pestis bv. Antiqua (strain Nepal516)</name>
    <dbReference type="NCBI Taxonomy" id="377628"/>
    <lineage>
        <taxon>Bacteria</taxon>
        <taxon>Pseudomonadati</taxon>
        <taxon>Pseudomonadota</taxon>
        <taxon>Gammaproteobacteria</taxon>
        <taxon>Enterobacterales</taxon>
        <taxon>Yersiniaceae</taxon>
        <taxon>Yersinia</taxon>
    </lineage>
</organism>
<feature type="chain" id="PRO_1000021918" description="NAD-capped RNA hydrolase NudC">
    <location>
        <begin position="1"/>
        <end position="260"/>
    </location>
</feature>
<feature type="domain" description="Nudix hydrolase" evidence="1">
    <location>
        <begin position="125"/>
        <end position="248"/>
    </location>
</feature>
<feature type="short sequence motif" description="Nudix box" evidence="1">
    <location>
        <begin position="159"/>
        <end position="180"/>
    </location>
</feature>
<feature type="binding site" evidence="1">
    <location>
        <position position="25"/>
    </location>
    <ligand>
        <name>substrate</name>
    </ligand>
</feature>
<feature type="binding site" evidence="1">
    <location>
        <position position="69"/>
    </location>
    <ligand>
        <name>substrate</name>
    </ligand>
</feature>
<feature type="binding site" evidence="1">
    <location>
        <position position="98"/>
    </location>
    <ligand>
        <name>Zn(2+)</name>
        <dbReference type="ChEBI" id="CHEBI:29105"/>
    </ligand>
</feature>
<feature type="binding site" evidence="1">
    <location>
        <position position="101"/>
    </location>
    <ligand>
        <name>Zn(2+)</name>
        <dbReference type="ChEBI" id="CHEBI:29105"/>
    </ligand>
</feature>
<feature type="binding site" evidence="1">
    <location>
        <position position="111"/>
    </location>
    <ligand>
        <name>substrate</name>
    </ligand>
</feature>
<feature type="binding site" evidence="1">
    <location>
        <position position="116"/>
    </location>
    <ligand>
        <name>Zn(2+)</name>
        <dbReference type="ChEBI" id="CHEBI:29105"/>
    </ligand>
</feature>
<feature type="binding site" evidence="1">
    <location>
        <position position="119"/>
    </location>
    <ligand>
        <name>Zn(2+)</name>
        <dbReference type="ChEBI" id="CHEBI:29105"/>
    </ligand>
</feature>
<feature type="binding site" evidence="1">
    <location>
        <position position="124"/>
    </location>
    <ligand>
        <name>substrate</name>
    </ligand>
</feature>
<feature type="binding site" evidence="1">
    <location>
        <position position="158"/>
    </location>
    <ligand>
        <name>a divalent metal cation</name>
        <dbReference type="ChEBI" id="CHEBI:60240"/>
        <label>1</label>
    </ligand>
</feature>
<feature type="binding site" evidence="1">
    <location>
        <position position="174"/>
    </location>
    <ligand>
        <name>a divalent metal cation</name>
        <dbReference type="ChEBI" id="CHEBI:60240"/>
        <label>2</label>
    </ligand>
</feature>
<feature type="binding site" evidence="1">
    <location>
        <position position="174"/>
    </location>
    <ligand>
        <name>a divalent metal cation</name>
        <dbReference type="ChEBI" id="CHEBI:60240"/>
        <label>3</label>
    </ligand>
</feature>
<feature type="binding site" evidence="1">
    <location>
        <position position="178"/>
    </location>
    <ligand>
        <name>a divalent metal cation</name>
        <dbReference type="ChEBI" id="CHEBI:60240"/>
        <label>1</label>
    </ligand>
</feature>
<feature type="binding site" evidence="1">
    <location>
        <position position="178"/>
    </location>
    <ligand>
        <name>a divalent metal cation</name>
        <dbReference type="ChEBI" id="CHEBI:60240"/>
        <label>3</label>
    </ligand>
</feature>
<feature type="binding site" evidence="1">
    <location>
        <begin position="192"/>
        <end position="199"/>
    </location>
    <ligand>
        <name>substrate</name>
    </ligand>
</feature>
<feature type="binding site" evidence="1">
    <location>
        <position position="219"/>
    </location>
    <ligand>
        <name>a divalent metal cation</name>
        <dbReference type="ChEBI" id="CHEBI:60240"/>
        <label>1</label>
    </ligand>
</feature>
<feature type="binding site" evidence="1">
    <location>
        <position position="219"/>
    </location>
    <ligand>
        <name>a divalent metal cation</name>
        <dbReference type="ChEBI" id="CHEBI:60240"/>
        <label>3</label>
    </ligand>
</feature>
<feature type="binding site" evidence="1">
    <location>
        <position position="241"/>
    </location>
    <ligand>
        <name>substrate</name>
    </ligand>
</feature>
<comment type="function">
    <text evidence="1">mRNA decapping enzyme that specifically removes the nicotinamide adenine dinucleotide (NAD) cap from a subset of mRNAs by hydrolyzing the diphosphate linkage to produce nicotinamide mononucleotide (NMN) and 5' monophosphate mRNA. The NAD-cap is present at the 5'-end of some mRNAs and stabilizes RNA against 5'-processing. Has preference for mRNAs with a 5'-end purine. Catalyzes the hydrolysis of a broad range of dinucleotide pyrophosphates.</text>
</comment>
<comment type="catalytic activity">
    <reaction evidence="1">
        <text>a 5'-end NAD(+)-phospho-ribonucleoside in mRNA + H2O = a 5'-end phospho-adenosine-phospho-ribonucleoside in mRNA + beta-nicotinamide D-ribonucleotide + 2 H(+)</text>
        <dbReference type="Rhea" id="RHEA:60876"/>
        <dbReference type="Rhea" id="RHEA-COMP:15698"/>
        <dbReference type="Rhea" id="RHEA-COMP:15719"/>
        <dbReference type="ChEBI" id="CHEBI:14649"/>
        <dbReference type="ChEBI" id="CHEBI:15377"/>
        <dbReference type="ChEBI" id="CHEBI:15378"/>
        <dbReference type="ChEBI" id="CHEBI:144029"/>
        <dbReference type="ChEBI" id="CHEBI:144051"/>
    </reaction>
    <physiologicalReaction direction="left-to-right" evidence="1">
        <dbReference type="Rhea" id="RHEA:60877"/>
    </physiologicalReaction>
</comment>
<comment type="catalytic activity">
    <reaction evidence="1">
        <text>NAD(+) + H2O = beta-nicotinamide D-ribonucleotide + AMP + 2 H(+)</text>
        <dbReference type="Rhea" id="RHEA:11800"/>
        <dbReference type="ChEBI" id="CHEBI:14649"/>
        <dbReference type="ChEBI" id="CHEBI:15377"/>
        <dbReference type="ChEBI" id="CHEBI:15378"/>
        <dbReference type="ChEBI" id="CHEBI:57540"/>
        <dbReference type="ChEBI" id="CHEBI:456215"/>
        <dbReference type="EC" id="3.6.1.22"/>
    </reaction>
</comment>
<comment type="catalytic activity">
    <reaction evidence="1">
        <text>NADH + H2O = reduced beta-nicotinamide D-ribonucleotide + AMP + 2 H(+)</text>
        <dbReference type="Rhea" id="RHEA:48868"/>
        <dbReference type="ChEBI" id="CHEBI:15377"/>
        <dbReference type="ChEBI" id="CHEBI:15378"/>
        <dbReference type="ChEBI" id="CHEBI:57945"/>
        <dbReference type="ChEBI" id="CHEBI:90832"/>
        <dbReference type="ChEBI" id="CHEBI:456215"/>
        <dbReference type="EC" id="3.6.1.22"/>
    </reaction>
</comment>
<comment type="cofactor">
    <cofactor evidence="1">
        <name>Mg(2+)</name>
        <dbReference type="ChEBI" id="CHEBI:18420"/>
    </cofactor>
    <cofactor evidence="1">
        <name>Mn(2+)</name>
        <dbReference type="ChEBI" id="CHEBI:29035"/>
    </cofactor>
    <text evidence="1">Divalent metal cations. Mg(2+) or Mn(2+).</text>
</comment>
<comment type="cofactor">
    <cofactor evidence="1">
        <name>Zn(2+)</name>
        <dbReference type="ChEBI" id="CHEBI:29105"/>
    </cofactor>
    <text evidence="1">Binds 1 zinc ion per subunit.</text>
</comment>
<comment type="subunit">
    <text evidence="1">Homodimer.</text>
</comment>
<comment type="similarity">
    <text evidence="1">Belongs to the Nudix hydrolase family. NudC subfamily.</text>
</comment>
<gene>
    <name evidence="1" type="primary">nudC</name>
    <name type="ordered locus">YPN_0229</name>
    <name type="ORF">YP516_0207</name>
</gene>